<keyword id="KW-0312">Gluconeogenesis</keyword>
<keyword id="KW-0324">Glycolysis</keyword>
<keyword id="KW-0413">Isomerase</keyword>
<feature type="chain" id="PRO_0000229143" description="2,3-bisphosphoglycerate-dependent phosphoglycerate mutase">
    <location>
        <begin position="1"/>
        <end position="228"/>
    </location>
</feature>
<feature type="active site" description="Tele-phosphohistidine intermediate" evidence="1">
    <location>
        <position position="9"/>
    </location>
</feature>
<feature type="active site" description="Proton donor/acceptor" evidence="1">
    <location>
        <position position="87"/>
    </location>
</feature>
<feature type="binding site" evidence="1">
    <location>
        <begin position="8"/>
        <end position="15"/>
    </location>
    <ligand>
        <name>substrate</name>
    </ligand>
</feature>
<feature type="binding site" evidence="1">
    <location>
        <begin position="21"/>
        <end position="22"/>
    </location>
    <ligand>
        <name>substrate</name>
    </ligand>
</feature>
<feature type="binding site" evidence="1">
    <location>
        <position position="60"/>
    </location>
    <ligand>
        <name>substrate</name>
    </ligand>
</feature>
<feature type="binding site" evidence="1">
    <location>
        <begin position="87"/>
        <end position="90"/>
    </location>
    <ligand>
        <name>substrate</name>
    </ligand>
</feature>
<feature type="binding site" evidence="1">
    <location>
        <position position="98"/>
    </location>
    <ligand>
        <name>substrate</name>
    </ligand>
</feature>
<feature type="binding site" evidence="1">
    <location>
        <begin position="114"/>
        <end position="115"/>
    </location>
    <ligand>
        <name>substrate</name>
    </ligand>
</feature>
<feature type="binding site" evidence="1">
    <location>
        <begin position="183"/>
        <end position="184"/>
    </location>
    <ligand>
        <name>substrate</name>
    </ligand>
</feature>
<feature type="site" description="Transition state stabilizer" evidence="1">
    <location>
        <position position="182"/>
    </location>
</feature>
<sequence>MPKLILCRHGQSEWNAKNLFTGWEDVNLSEQGINEATRAGEKVRENNIAIDVAFTSLLTRALDTTHYILTESKQQWIPVYKSWRLNERHYGGLQGLNKDDARKEFGEEQVHIWRRSYDVKPPAETEEQREAYLADRRYNHLDKRMMPYSESLKDTLVRVIPFWTDHISQYLLDGQTVLVSAHGNSIRALIKYLEDVSDEDIINYEIKTGAPLVYELTDDLEVIDKYYL</sequence>
<dbReference type="EC" id="5.4.2.11" evidence="1"/>
<dbReference type="EMBL" id="AJ938182">
    <property type="protein sequence ID" value="CAI81985.1"/>
    <property type="molecule type" value="Genomic_DNA"/>
</dbReference>
<dbReference type="RefSeq" id="WP_001125208.1">
    <property type="nucleotide sequence ID" value="NC_007622.1"/>
</dbReference>
<dbReference type="SMR" id="Q2YVZ6"/>
<dbReference type="KEGG" id="sab:SAB2296c"/>
<dbReference type="HOGENOM" id="CLU_033323_1_5_9"/>
<dbReference type="UniPathway" id="UPA00109">
    <property type="reaction ID" value="UER00186"/>
</dbReference>
<dbReference type="GO" id="GO:0004619">
    <property type="term" value="F:phosphoglycerate mutase activity"/>
    <property type="evidence" value="ECO:0007669"/>
    <property type="project" value="UniProtKB-EC"/>
</dbReference>
<dbReference type="GO" id="GO:0006094">
    <property type="term" value="P:gluconeogenesis"/>
    <property type="evidence" value="ECO:0007669"/>
    <property type="project" value="UniProtKB-UniRule"/>
</dbReference>
<dbReference type="GO" id="GO:0006096">
    <property type="term" value="P:glycolytic process"/>
    <property type="evidence" value="ECO:0007669"/>
    <property type="project" value="UniProtKB-UniRule"/>
</dbReference>
<dbReference type="CDD" id="cd07067">
    <property type="entry name" value="HP_PGM_like"/>
    <property type="match status" value="1"/>
</dbReference>
<dbReference type="FunFam" id="3.40.50.1240:FF:000003">
    <property type="entry name" value="2,3-bisphosphoglycerate-dependent phosphoglycerate mutase"/>
    <property type="match status" value="1"/>
</dbReference>
<dbReference type="Gene3D" id="3.40.50.1240">
    <property type="entry name" value="Phosphoglycerate mutase-like"/>
    <property type="match status" value="1"/>
</dbReference>
<dbReference type="HAMAP" id="MF_01039">
    <property type="entry name" value="PGAM_GpmA"/>
    <property type="match status" value="1"/>
</dbReference>
<dbReference type="InterPro" id="IPR013078">
    <property type="entry name" value="His_Pase_superF_clade-1"/>
</dbReference>
<dbReference type="InterPro" id="IPR029033">
    <property type="entry name" value="His_PPase_superfam"/>
</dbReference>
<dbReference type="InterPro" id="IPR001345">
    <property type="entry name" value="PG/BPGM_mutase_AS"/>
</dbReference>
<dbReference type="InterPro" id="IPR005952">
    <property type="entry name" value="Phosphogly_mut1"/>
</dbReference>
<dbReference type="NCBIfam" id="TIGR01258">
    <property type="entry name" value="pgm_1"/>
    <property type="match status" value="1"/>
</dbReference>
<dbReference type="NCBIfam" id="NF010713">
    <property type="entry name" value="PRK14115.1"/>
    <property type="match status" value="1"/>
</dbReference>
<dbReference type="NCBIfam" id="NF010717">
    <property type="entry name" value="PRK14119.1"/>
    <property type="match status" value="1"/>
</dbReference>
<dbReference type="PANTHER" id="PTHR11931">
    <property type="entry name" value="PHOSPHOGLYCERATE MUTASE"/>
    <property type="match status" value="1"/>
</dbReference>
<dbReference type="Pfam" id="PF00300">
    <property type="entry name" value="His_Phos_1"/>
    <property type="match status" value="1"/>
</dbReference>
<dbReference type="PIRSF" id="PIRSF000709">
    <property type="entry name" value="6PFK_2-Ptase"/>
    <property type="match status" value="1"/>
</dbReference>
<dbReference type="SMART" id="SM00855">
    <property type="entry name" value="PGAM"/>
    <property type="match status" value="1"/>
</dbReference>
<dbReference type="SUPFAM" id="SSF53254">
    <property type="entry name" value="Phosphoglycerate mutase-like"/>
    <property type="match status" value="1"/>
</dbReference>
<dbReference type="PROSITE" id="PS00175">
    <property type="entry name" value="PG_MUTASE"/>
    <property type="match status" value="1"/>
</dbReference>
<reference key="1">
    <citation type="journal article" date="2007" name="PLoS ONE">
        <title>Molecular correlates of host specialization in Staphylococcus aureus.</title>
        <authorList>
            <person name="Herron-Olson L."/>
            <person name="Fitzgerald J.R."/>
            <person name="Musser J.M."/>
            <person name="Kapur V."/>
        </authorList>
    </citation>
    <scope>NUCLEOTIDE SEQUENCE [LARGE SCALE GENOMIC DNA]</scope>
    <source>
        <strain>bovine RF122 / ET3-1</strain>
    </source>
</reference>
<accession>Q2YVZ6</accession>
<gene>
    <name evidence="1" type="primary">gpmA</name>
    <name type="ordered locus">SAB2296c</name>
</gene>
<proteinExistence type="inferred from homology"/>
<name>GPMA_STAAB</name>
<comment type="function">
    <text evidence="1">Catalyzes the interconversion of 2-phosphoglycerate and 3-phosphoglycerate.</text>
</comment>
<comment type="catalytic activity">
    <reaction evidence="1">
        <text>(2R)-2-phosphoglycerate = (2R)-3-phosphoglycerate</text>
        <dbReference type="Rhea" id="RHEA:15901"/>
        <dbReference type="ChEBI" id="CHEBI:58272"/>
        <dbReference type="ChEBI" id="CHEBI:58289"/>
        <dbReference type="EC" id="5.4.2.11"/>
    </reaction>
</comment>
<comment type="pathway">
    <text evidence="1">Carbohydrate degradation; glycolysis; pyruvate from D-glyceraldehyde 3-phosphate: step 3/5.</text>
</comment>
<comment type="similarity">
    <text evidence="1">Belongs to the phosphoglycerate mutase family. BPG-dependent PGAM subfamily.</text>
</comment>
<protein>
    <recommendedName>
        <fullName evidence="1">2,3-bisphosphoglycerate-dependent phosphoglycerate mutase</fullName>
        <shortName evidence="1">BPG-dependent PGAM</shortName>
        <shortName evidence="1">PGAM</shortName>
        <shortName evidence="1">Phosphoglyceromutase</shortName>
        <shortName evidence="1">dPGM</shortName>
        <ecNumber evidence="1">5.4.2.11</ecNumber>
    </recommendedName>
</protein>
<evidence type="ECO:0000255" key="1">
    <source>
        <dbReference type="HAMAP-Rule" id="MF_01039"/>
    </source>
</evidence>
<organism>
    <name type="scientific">Staphylococcus aureus (strain bovine RF122 / ET3-1)</name>
    <dbReference type="NCBI Taxonomy" id="273036"/>
    <lineage>
        <taxon>Bacteria</taxon>
        <taxon>Bacillati</taxon>
        <taxon>Bacillota</taxon>
        <taxon>Bacilli</taxon>
        <taxon>Bacillales</taxon>
        <taxon>Staphylococcaceae</taxon>
        <taxon>Staphylococcus</taxon>
    </lineage>
</organism>